<dbReference type="EMBL" id="CP002685">
    <property type="protein sequence ID" value="AEC10506.1"/>
    <property type="molecule type" value="Genomic_DNA"/>
</dbReference>
<dbReference type="EMBL" id="AY074650">
    <property type="protein sequence ID" value="AAL69466.1"/>
    <property type="molecule type" value="mRNA"/>
</dbReference>
<dbReference type="PIR" id="C84886">
    <property type="entry name" value="C84886"/>
</dbReference>
<dbReference type="RefSeq" id="NP_182034.1">
    <property type="nucleotide sequence ID" value="NM_130072.3"/>
</dbReference>
<dbReference type="SMR" id="Q9SHD3"/>
<dbReference type="BioGRID" id="4451">
    <property type="interactions" value="1"/>
</dbReference>
<dbReference type="FunCoup" id="Q9SHD3">
    <property type="interactions" value="176"/>
</dbReference>
<dbReference type="IntAct" id="Q9SHD3">
    <property type="interactions" value="1"/>
</dbReference>
<dbReference type="STRING" id="3702.Q9SHD3"/>
<dbReference type="PaxDb" id="3702-AT2G45080.1"/>
<dbReference type="EnsemblPlants" id="AT2G45080.1">
    <property type="protein sequence ID" value="AT2G45080.1"/>
    <property type="gene ID" value="AT2G45080"/>
</dbReference>
<dbReference type="GeneID" id="819115"/>
<dbReference type="Gramene" id="AT2G45080.1">
    <property type="protein sequence ID" value="AT2G45080.1"/>
    <property type="gene ID" value="AT2G45080"/>
</dbReference>
<dbReference type="KEGG" id="ath:AT2G45080"/>
<dbReference type="Araport" id="AT2G45080"/>
<dbReference type="TAIR" id="AT2G45080">
    <property type="gene designation" value="CYCP3"/>
</dbReference>
<dbReference type="eggNOG" id="KOG1674">
    <property type="taxonomic scope" value="Eukaryota"/>
</dbReference>
<dbReference type="HOGENOM" id="CLU_057371_0_1_1"/>
<dbReference type="InParanoid" id="Q9SHD3"/>
<dbReference type="OMA" id="DMMERLM"/>
<dbReference type="OrthoDB" id="337735at2759"/>
<dbReference type="PhylomeDB" id="Q9SHD3"/>
<dbReference type="PRO" id="PR:Q9SHD3"/>
<dbReference type="Proteomes" id="UP000006548">
    <property type="component" value="Chromosome 2"/>
</dbReference>
<dbReference type="ExpressionAtlas" id="Q9SHD3">
    <property type="expression patterns" value="baseline and differential"/>
</dbReference>
<dbReference type="GO" id="GO:0019901">
    <property type="term" value="F:protein kinase binding"/>
    <property type="evidence" value="ECO:0007669"/>
    <property type="project" value="InterPro"/>
</dbReference>
<dbReference type="GO" id="GO:0051301">
    <property type="term" value="P:cell division"/>
    <property type="evidence" value="ECO:0007669"/>
    <property type="project" value="UniProtKB-KW"/>
</dbReference>
<dbReference type="CDD" id="cd20604">
    <property type="entry name" value="CYCLIN_AtCycU-like"/>
    <property type="match status" value="1"/>
</dbReference>
<dbReference type="Gene3D" id="1.10.472.10">
    <property type="entry name" value="Cyclin-like"/>
    <property type="match status" value="1"/>
</dbReference>
<dbReference type="InterPro" id="IPR036915">
    <property type="entry name" value="Cyclin-like_sf"/>
</dbReference>
<dbReference type="InterPro" id="IPR012389">
    <property type="entry name" value="Cyclin_P/U"/>
</dbReference>
<dbReference type="InterPro" id="IPR013922">
    <property type="entry name" value="Cyclin_PHO80-like"/>
</dbReference>
<dbReference type="PANTHER" id="PTHR15615">
    <property type="match status" value="1"/>
</dbReference>
<dbReference type="PANTHER" id="PTHR15615:SF15">
    <property type="entry name" value="CYCLIN-U2-1"/>
    <property type="match status" value="1"/>
</dbReference>
<dbReference type="Pfam" id="PF08613">
    <property type="entry name" value="Cyclin"/>
    <property type="match status" value="1"/>
</dbReference>
<dbReference type="PIRSF" id="PIRSF027110">
    <property type="entry name" value="PREG"/>
    <property type="match status" value="1"/>
</dbReference>
<dbReference type="SUPFAM" id="SSF47954">
    <property type="entry name" value="Cyclin-like"/>
    <property type="match status" value="1"/>
</dbReference>
<proteinExistence type="evidence at protein level"/>
<accession>Q9SHD3</accession>
<reference key="1">
    <citation type="journal article" date="1999" name="Nature">
        <title>Sequence and analysis of chromosome 2 of the plant Arabidopsis thaliana.</title>
        <authorList>
            <person name="Lin X."/>
            <person name="Kaul S."/>
            <person name="Rounsley S.D."/>
            <person name="Shea T.P."/>
            <person name="Benito M.-I."/>
            <person name="Town C.D."/>
            <person name="Fujii C.Y."/>
            <person name="Mason T.M."/>
            <person name="Bowman C.L."/>
            <person name="Barnstead M.E."/>
            <person name="Feldblyum T.V."/>
            <person name="Buell C.R."/>
            <person name="Ketchum K.A."/>
            <person name="Lee J.J."/>
            <person name="Ronning C.M."/>
            <person name="Koo H.L."/>
            <person name="Moffat K.S."/>
            <person name="Cronin L.A."/>
            <person name="Shen M."/>
            <person name="Pai G."/>
            <person name="Van Aken S."/>
            <person name="Umayam L."/>
            <person name="Tallon L.J."/>
            <person name="Gill J.E."/>
            <person name="Adams M.D."/>
            <person name="Carrera A.J."/>
            <person name="Creasy T.H."/>
            <person name="Goodman H.M."/>
            <person name="Somerville C.R."/>
            <person name="Copenhaver G.P."/>
            <person name="Preuss D."/>
            <person name="Nierman W.C."/>
            <person name="White O."/>
            <person name="Eisen J.A."/>
            <person name="Salzberg S.L."/>
            <person name="Fraser C.M."/>
            <person name="Venter J.C."/>
        </authorList>
    </citation>
    <scope>NUCLEOTIDE SEQUENCE [LARGE SCALE GENOMIC DNA]</scope>
    <source>
        <strain>cv. Columbia</strain>
    </source>
</reference>
<reference key="2">
    <citation type="journal article" date="2017" name="Plant J.">
        <title>Araport11: a complete reannotation of the Arabidopsis thaliana reference genome.</title>
        <authorList>
            <person name="Cheng C.Y."/>
            <person name="Krishnakumar V."/>
            <person name="Chan A.P."/>
            <person name="Thibaud-Nissen F."/>
            <person name="Schobel S."/>
            <person name="Town C.D."/>
        </authorList>
    </citation>
    <scope>GENOME REANNOTATION</scope>
    <source>
        <strain>cv. Columbia</strain>
    </source>
</reference>
<reference key="3">
    <citation type="journal article" date="2003" name="Science">
        <title>Empirical analysis of transcriptional activity in the Arabidopsis genome.</title>
        <authorList>
            <person name="Yamada K."/>
            <person name="Lim J."/>
            <person name="Dale J.M."/>
            <person name="Chen H."/>
            <person name="Shinn P."/>
            <person name="Palm C.J."/>
            <person name="Southwick A.M."/>
            <person name="Wu H.C."/>
            <person name="Kim C.J."/>
            <person name="Nguyen M."/>
            <person name="Pham P.K."/>
            <person name="Cheuk R.F."/>
            <person name="Karlin-Newmann G."/>
            <person name="Liu S.X."/>
            <person name="Lam B."/>
            <person name="Sakano H."/>
            <person name="Wu T."/>
            <person name="Yu G."/>
            <person name="Miranda M."/>
            <person name="Quach H.L."/>
            <person name="Tripp M."/>
            <person name="Chang C.H."/>
            <person name="Lee J.M."/>
            <person name="Toriumi M.J."/>
            <person name="Chan M.M."/>
            <person name="Tang C.C."/>
            <person name="Onodera C.S."/>
            <person name="Deng J.M."/>
            <person name="Akiyama K."/>
            <person name="Ansari Y."/>
            <person name="Arakawa T."/>
            <person name="Banh J."/>
            <person name="Banno F."/>
            <person name="Bowser L."/>
            <person name="Brooks S.Y."/>
            <person name="Carninci P."/>
            <person name="Chao Q."/>
            <person name="Choy N."/>
            <person name="Enju A."/>
            <person name="Goldsmith A.D."/>
            <person name="Gurjal M."/>
            <person name="Hansen N.F."/>
            <person name="Hayashizaki Y."/>
            <person name="Johnson-Hopson C."/>
            <person name="Hsuan V.W."/>
            <person name="Iida K."/>
            <person name="Karnes M."/>
            <person name="Khan S."/>
            <person name="Koesema E."/>
            <person name="Ishida J."/>
            <person name="Jiang P.X."/>
            <person name="Jones T."/>
            <person name="Kawai J."/>
            <person name="Kamiya A."/>
            <person name="Meyers C."/>
            <person name="Nakajima M."/>
            <person name="Narusaka M."/>
            <person name="Seki M."/>
            <person name="Sakurai T."/>
            <person name="Satou M."/>
            <person name="Tamse R."/>
            <person name="Vaysberg M."/>
            <person name="Wallender E.K."/>
            <person name="Wong C."/>
            <person name="Yamamura Y."/>
            <person name="Yuan S."/>
            <person name="Shinozaki K."/>
            <person name="Davis R.W."/>
            <person name="Theologis A."/>
            <person name="Ecker J.R."/>
        </authorList>
    </citation>
    <scope>NUCLEOTIDE SEQUENCE [LARGE SCALE MRNA]</scope>
    <source>
        <strain>cv. Columbia</strain>
    </source>
</reference>
<reference key="4">
    <citation type="journal article" date="2004" name="Cell. Mol. Life Sci.">
        <title>Molecular characterization of Arabidopsis PHO80-like proteins, a novel class of CDKA;1-interacting cyclins.</title>
        <authorList>
            <person name="Torres Acosta J.A."/>
            <person name="de Almeida Engler J."/>
            <person name="Raes J."/>
            <person name="Magyar Z."/>
            <person name="de Groodt R."/>
            <person name="Inze D."/>
            <person name="de Veylder L."/>
        </authorList>
    </citation>
    <scope>TISSUE SPECIFICITY</scope>
    <scope>INTERACTION WITH CDKA-1</scope>
</reference>
<reference key="5">
    <citation type="journal article" date="2004" name="Plant Physiol.">
        <title>Genome-wide analysis of the cyclin family in Arabidopsis and comparative phylogenetic analysis of plant cyclin-like proteins.</title>
        <authorList>
            <person name="Wang G."/>
            <person name="Kong H."/>
            <person name="Sun Y."/>
            <person name="Zhang X."/>
            <person name="Zhang W."/>
            <person name="Altman N."/>
            <person name="dePamphilis C.W."/>
            <person name="Ma H."/>
        </authorList>
    </citation>
    <scope>GENE FAMILY</scope>
    <scope>NOMENCLATURE</scope>
</reference>
<protein>
    <recommendedName>
        <fullName>Cyclin-U2-1</fullName>
        <shortName>CycU2;1</shortName>
    </recommendedName>
    <alternativeName>
        <fullName>Cyclin-P3.1</fullName>
        <shortName>CycP3;1</shortName>
    </alternativeName>
</protein>
<evidence type="ECO:0000269" key="1">
    <source>
    </source>
</evidence>
<evidence type="ECO:0000305" key="2"/>
<feature type="chain" id="PRO_0000287069" description="Cyclin-U2-1">
    <location>
        <begin position="1"/>
        <end position="222"/>
    </location>
</feature>
<sequence>MDSLAISPRKLRSDLYSYSYQDDSNTVPLVISVLSSLIERTLARNERISRSYGGFGKTRVFDCREIPDMTIQSYLERIFRYTKAGPSVYVVAYVYIDRFCQNNQGFRISLTNVHRLLITTIMIASKYVEDMNYKNSYFAKVGGLETEDLNNLELEFLFLMGFKLHVNVSVFESYCCHLEREVSIGGGYQIEKALRCAEEIKSRQIVQDPKHHHHHQFSRIML</sequence>
<keyword id="KW-0131">Cell cycle</keyword>
<keyword id="KW-0132">Cell division</keyword>
<keyword id="KW-0195">Cyclin</keyword>
<keyword id="KW-1185">Reference proteome</keyword>
<gene>
    <name type="primary">CYCU2-1</name>
    <name type="ordered locus">At2g45080</name>
    <name type="ORF">T14P1.11</name>
</gene>
<name>CCU21_ARATH</name>
<comment type="subunit">
    <text evidence="1">Interacts with CDKA-1.</text>
</comment>
<comment type="tissue specificity">
    <text evidence="1">Expressed in roots, stems and flowers. Expressed in the shoot apex, leaf primordia and young leaves.</text>
</comment>
<comment type="similarity">
    <text evidence="2">Belongs to the cyclin family. Cyclin U/P subfamily.</text>
</comment>
<organism>
    <name type="scientific">Arabidopsis thaliana</name>
    <name type="common">Mouse-ear cress</name>
    <dbReference type="NCBI Taxonomy" id="3702"/>
    <lineage>
        <taxon>Eukaryota</taxon>
        <taxon>Viridiplantae</taxon>
        <taxon>Streptophyta</taxon>
        <taxon>Embryophyta</taxon>
        <taxon>Tracheophyta</taxon>
        <taxon>Spermatophyta</taxon>
        <taxon>Magnoliopsida</taxon>
        <taxon>eudicotyledons</taxon>
        <taxon>Gunneridae</taxon>
        <taxon>Pentapetalae</taxon>
        <taxon>rosids</taxon>
        <taxon>malvids</taxon>
        <taxon>Brassicales</taxon>
        <taxon>Brassicaceae</taxon>
        <taxon>Camelineae</taxon>
        <taxon>Arabidopsis</taxon>
    </lineage>
</organism>